<protein>
    <recommendedName>
        <fullName evidence="1">Asparagine--tRNA ligase</fullName>
        <ecNumber evidence="1">6.1.1.22</ecNumber>
    </recommendedName>
    <alternativeName>
        <fullName evidence="1">Asparaginyl-tRNA synthetase</fullName>
        <shortName evidence="1">AsnRS</shortName>
    </alternativeName>
</protein>
<reference key="1">
    <citation type="journal article" date="2005" name="Nucleic Acids Res.">
        <title>Genomic blueprint of Hahella chejuensis, a marine microbe producing an algicidal agent.</title>
        <authorList>
            <person name="Jeong H."/>
            <person name="Yim J.H."/>
            <person name="Lee C."/>
            <person name="Choi S.-H."/>
            <person name="Park Y.K."/>
            <person name="Yoon S.H."/>
            <person name="Hur C.-G."/>
            <person name="Kang H.-Y."/>
            <person name="Kim D."/>
            <person name="Lee H.H."/>
            <person name="Park K.H."/>
            <person name="Park S.-H."/>
            <person name="Park H.-S."/>
            <person name="Lee H.K."/>
            <person name="Oh T.K."/>
            <person name="Kim J.F."/>
        </authorList>
    </citation>
    <scope>NUCLEOTIDE SEQUENCE [LARGE SCALE GENOMIC DNA]</scope>
    <source>
        <strain>KCTC 2396</strain>
    </source>
</reference>
<accession>Q2SJV9</accession>
<feature type="chain" id="PRO_1000051399" description="Asparagine--tRNA ligase">
    <location>
        <begin position="1"/>
        <end position="465"/>
    </location>
</feature>
<comment type="catalytic activity">
    <reaction evidence="1">
        <text>tRNA(Asn) + L-asparagine + ATP = L-asparaginyl-tRNA(Asn) + AMP + diphosphate + H(+)</text>
        <dbReference type="Rhea" id="RHEA:11180"/>
        <dbReference type="Rhea" id="RHEA-COMP:9659"/>
        <dbReference type="Rhea" id="RHEA-COMP:9674"/>
        <dbReference type="ChEBI" id="CHEBI:15378"/>
        <dbReference type="ChEBI" id="CHEBI:30616"/>
        <dbReference type="ChEBI" id="CHEBI:33019"/>
        <dbReference type="ChEBI" id="CHEBI:58048"/>
        <dbReference type="ChEBI" id="CHEBI:78442"/>
        <dbReference type="ChEBI" id="CHEBI:78515"/>
        <dbReference type="ChEBI" id="CHEBI:456215"/>
        <dbReference type="EC" id="6.1.1.22"/>
    </reaction>
</comment>
<comment type="subunit">
    <text evidence="1">Homodimer.</text>
</comment>
<comment type="subcellular location">
    <subcellularLocation>
        <location evidence="1">Cytoplasm</location>
    </subcellularLocation>
</comment>
<comment type="similarity">
    <text evidence="1">Belongs to the class-II aminoacyl-tRNA synthetase family.</text>
</comment>
<organism>
    <name type="scientific">Hahella chejuensis (strain KCTC 2396)</name>
    <dbReference type="NCBI Taxonomy" id="349521"/>
    <lineage>
        <taxon>Bacteria</taxon>
        <taxon>Pseudomonadati</taxon>
        <taxon>Pseudomonadota</taxon>
        <taxon>Gammaproteobacteria</taxon>
        <taxon>Oceanospirillales</taxon>
        <taxon>Hahellaceae</taxon>
        <taxon>Hahella</taxon>
    </lineage>
</organism>
<dbReference type="EC" id="6.1.1.22" evidence="1"/>
<dbReference type="EMBL" id="CP000155">
    <property type="protein sequence ID" value="ABC29065.1"/>
    <property type="molecule type" value="Genomic_DNA"/>
</dbReference>
<dbReference type="RefSeq" id="WP_011396134.1">
    <property type="nucleotide sequence ID" value="NC_007645.1"/>
</dbReference>
<dbReference type="SMR" id="Q2SJV9"/>
<dbReference type="STRING" id="349521.HCH_02239"/>
<dbReference type="KEGG" id="hch:HCH_02239"/>
<dbReference type="eggNOG" id="COG0017">
    <property type="taxonomic scope" value="Bacteria"/>
</dbReference>
<dbReference type="HOGENOM" id="CLU_004553_2_0_6"/>
<dbReference type="OrthoDB" id="9762036at2"/>
<dbReference type="Proteomes" id="UP000000238">
    <property type="component" value="Chromosome"/>
</dbReference>
<dbReference type="GO" id="GO:0005737">
    <property type="term" value="C:cytoplasm"/>
    <property type="evidence" value="ECO:0007669"/>
    <property type="project" value="UniProtKB-SubCell"/>
</dbReference>
<dbReference type="GO" id="GO:0004816">
    <property type="term" value="F:asparagine-tRNA ligase activity"/>
    <property type="evidence" value="ECO:0007669"/>
    <property type="project" value="UniProtKB-UniRule"/>
</dbReference>
<dbReference type="GO" id="GO:0005524">
    <property type="term" value="F:ATP binding"/>
    <property type="evidence" value="ECO:0007669"/>
    <property type="project" value="UniProtKB-UniRule"/>
</dbReference>
<dbReference type="GO" id="GO:0003676">
    <property type="term" value="F:nucleic acid binding"/>
    <property type="evidence" value="ECO:0007669"/>
    <property type="project" value="InterPro"/>
</dbReference>
<dbReference type="GO" id="GO:0006421">
    <property type="term" value="P:asparaginyl-tRNA aminoacylation"/>
    <property type="evidence" value="ECO:0007669"/>
    <property type="project" value="UniProtKB-UniRule"/>
</dbReference>
<dbReference type="CDD" id="cd00776">
    <property type="entry name" value="AsxRS_core"/>
    <property type="match status" value="1"/>
</dbReference>
<dbReference type="CDD" id="cd04318">
    <property type="entry name" value="EcAsnRS_like_N"/>
    <property type="match status" value="1"/>
</dbReference>
<dbReference type="FunFam" id="3.30.930.10:FF:000016">
    <property type="entry name" value="Asparagine--tRNA ligase"/>
    <property type="match status" value="1"/>
</dbReference>
<dbReference type="Gene3D" id="3.30.930.10">
    <property type="entry name" value="Bira Bifunctional Protein, Domain 2"/>
    <property type="match status" value="1"/>
</dbReference>
<dbReference type="Gene3D" id="2.40.50.140">
    <property type="entry name" value="Nucleic acid-binding proteins"/>
    <property type="match status" value="1"/>
</dbReference>
<dbReference type="HAMAP" id="MF_00534">
    <property type="entry name" value="Asn_tRNA_synth"/>
    <property type="match status" value="1"/>
</dbReference>
<dbReference type="InterPro" id="IPR004364">
    <property type="entry name" value="Aa-tRNA-synt_II"/>
</dbReference>
<dbReference type="InterPro" id="IPR006195">
    <property type="entry name" value="aa-tRNA-synth_II"/>
</dbReference>
<dbReference type="InterPro" id="IPR045864">
    <property type="entry name" value="aa-tRNA-synth_II/BPL/LPL"/>
</dbReference>
<dbReference type="InterPro" id="IPR004522">
    <property type="entry name" value="Asn-tRNA-ligase"/>
</dbReference>
<dbReference type="InterPro" id="IPR002312">
    <property type="entry name" value="Asp/Asn-tRNA-synth_IIb"/>
</dbReference>
<dbReference type="InterPro" id="IPR012340">
    <property type="entry name" value="NA-bd_OB-fold"/>
</dbReference>
<dbReference type="InterPro" id="IPR004365">
    <property type="entry name" value="NA-bd_OB_tRNA"/>
</dbReference>
<dbReference type="NCBIfam" id="TIGR00457">
    <property type="entry name" value="asnS"/>
    <property type="match status" value="1"/>
</dbReference>
<dbReference type="NCBIfam" id="NF003037">
    <property type="entry name" value="PRK03932.1"/>
    <property type="match status" value="1"/>
</dbReference>
<dbReference type="PANTHER" id="PTHR22594:SF34">
    <property type="entry name" value="ASPARAGINE--TRNA LIGASE, MITOCHONDRIAL-RELATED"/>
    <property type="match status" value="1"/>
</dbReference>
<dbReference type="PANTHER" id="PTHR22594">
    <property type="entry name" value="ASPARTYL/LYSYL-TRNA SYNTHETASE"/>
    <property type="match status" value="1"/>
</dbReference>
<dbReference type="Pfam" id="PF00152">
    <property type="entry name" value="tRNA-synt_2"/>
    <property type="match status" value="1"/>
</dbReference>
<dbReference type="Pfam" id="PF01336">
    <property type="entry name" value="tRNA_anti-codon"/>
    <property type="match status" value="1"/>
</dbReference>
<dbReference type="PRINTS" id="PR01042">
    <property type="entry name" value="TRNASYNTHASP"/>
</dbReference>
<dbReference type="SUPFAM" id="SSF55681">
    <property type="entry name" value="Class II aaRS and biotin synthetases"/>
    <property type="match status" value="1"/>
</dbReference>
<dbReference type="SUPFAM" id="SSF50249">
    <property type="entry name" value="Nucleic acid-binding proteins"/>
    <property type="match status" value="1"/>
</dbReference>
<dbReference type="PROSITE" id="PS50862">
    <property type="entry name" value="AA_TRNA_LIGASE_II"/>
    <property type="match status" value="1"/>
</dbReference>
<keyword id="KW-0030">Aminoacyl-tRNA synthetase</keyword>
<keyword id="KW-0067">ATP-binding</keyword>
<keyword id="KW-0963">Cytoplasm</keyword>
<keyword id="KW-0436">Ligase</keyword>
<keyword id="KW-0547">Nucleotide-binding</keyword>
<keyword id="KW-0648">Protein biosynthesis</keyword>
<keyword id="KW-1185">Reference proteome</keyword>
<proteinExistence type="inferred from homology"/>
<evidence type="ECO:0000255" key="1">
    <source>
        <dbReference type="HAMAP-Rule" id="MF_00534"/>
    </source>
</evidence>
<sequence length="465" mass="52546">MTHYAISDLLKNKAEIGSEVTVKGWVRSRRDSKAGVSFIHVHDGSCFDAIQAVVAKELPNYDADVLRLTTGCSLIVTGTLVESPGQGQSCEIQATSVELVGLVDDPETYPVAKKRHTFEFLRGVAHLRPRTNAFGAVTRVRTTLSHAVHHFFYEQGFQWINTPILTASDCEGAGELFRVSTLDMANLPKTDSGKIDYSKDFFGKETFLTVSGQLNVEAYCLAMSKVYTFGPTFRAENSNTSRHLAEFWMIEPEIAFADLNDDADLAERFLKHMFKVVLDERSDDMAFFAERINPDVVSRLENMVDKEFVRIDYSEAIKILQNCGKKFEYPVQWGLDLQSEHERYLAETHVGAPVIVMNYPKEIKAFYMRLNDDDKTVAAMDVLAPGIGEIIGGSQREDRLDVLDARIGDMHHKEELWWYRDLRRYGSVPHAGFGLGFERLIAYVTGMENVRDVIPFPRTPDNAQF</sequence>
<name>SYN_HAHCH</name>
<gene>
    <name evidence="1" type="primary">asnS</name>
    <name type="ordered locus">HCH_02239</name>
</gene>